<sequence>MSAHDLKLEEIVNAETLRRKLNELADTADESYTSLPMRKVVLQTLKDALASGRANAEDMLMKDGGGTLCAKRLCYLMDTLIDILFEFATTRAYPTRNPSKAENMALVAVGGYGRGGLAQGSDIDLLFLLPYKQTPWGEQVVEYTLYMLWDMGLKVGHSTRNIDECIRLAREDMTIRTALLDARFLTGDKDLFRTLEIRFEEEIVKGTEPEFIQAKLAERDARHRKAGETRYLVEPNVKEGKGGQRDLHTLFWITKYFYRVKTKEELVKLGVLSRAELKLFNKAEDFLWAVRCHMHFATLKAEERLSFDIQPEIAQRLGYTAHPGQNYVERFMKHYFLVAKDVGDLTRIICAALEEQQAKHVPGFNRIFLTFSRRKRKLSDDGAFISENHRINIARPDIFRQDPVNMIRLFHLADRHGLEFHPEAMQSLTRSLKLINADLRENPEANRLFLEILTSPRNPELILRRMNESGVLGKFIPDFGKIVAMMQFNMYHHYTVDEHLLRCIAVLSEIEHGELKTEHPLSNHLITTIKRDRNLLYVTLLLHDIAKGRPEDHSIAGARIARRLCPRFGLTPSETETVEWLVREHLTMSMVAQSRDLNDRKTIIDFADTVQTMERLKLLLILTVCDIKAVGPGIWNGWKGQLLRTLFYETELVLTGGFSELSRAARDKQAREALAERLSDWPKEERDAYLALPYTNYFLTVSLDDQVRHAHFIRDADQQGRALVTMAKPHAFEAVTEITVLAPDHPRLLSVITGACAAAGGNIVDAQIFTTSNGRALDTILISREFDTDDDERRRAERVGKVIEDVLSGKAHLPDMLAKRTKPKKAARAFKVEPRVEINNTLSNKFTVIEVEGLDRPGLLSELTGLISDLSLDIASAHITTFGEKVIDSFYVTDLVGHKISNATRQGNIKRKLLALLGAENGARTNGRSPQAAA</sequence>
<reference key="1">
    <citation type="journal article" date="2002" name="Proc. Natl. Acad. Sci. U.S.A.">
        <title>The Brucella suis genome reveals fundamental similarities between animal and plant pathogens and symbionts.</title>
        <authorList>
            <person name="Paulsen I.T."/>
            <person name="Seshadri R."/>
            <person name="Nelson K.E."/>
            <person name="Eisen J.A."/>
            <person name="Heidelberg J.F."/>
            <person name="Read T.D."/>
            <person name="Dodson R.J."/>
            <person name="Umayam L.A."/>
            <person name="Brinkac L.M."/>
            <person name="Beanan M.J."/>
            <person name="Daugherty S.C."/>
            <person name="DeBoy R.T."/>
            <person name="Durkin A.S."/>
            <person name="Kolonay J.F."/>
            <person name="Madupu R."/>
            <person name="Nelson W.C."/>
            <person name="Ayodeji B."/>
            <person name="Kraul M."/>
            <person name="Shetty J."/>
            <person name="Malek J.A."/>
            <person name="Van Aken S.E."/>
            <person name="Riedmuller S."/>
            <person name="Tettelin H."/>
            <person name="Gill S.R."/>
            <person name="White O."/>
            <person name="Salzberg S.L."/>
            <person name="Hoover D.L."/>
            <person name="Lindler L.E."/>
            <person name="Halling S.M."/>
            <person name="Boyle S.M."/>
            <person name="Fraser C.M."/>
        </authorList>
    </citation>
    <scope>NUCLEOTIDE SEQUENCE [LARGE SCALE GENOMIC DNA]</scope>
    <source>
        <strain>1330</strain>
    </source>
</reference>
<reference key="2">
    <citation type="journal article" date="2011" name="J. Bacteriol.">
        <title>Revised genome sequence of Brucella suis 1330.</title>
        <authorList>
            <person name="Tae H."/>
            <person name="Shallom S."/>
            <person name="Settlage R."/>
            <person name="Preston D."/>
            <person name="Adams L.G."/>
            <person name="Garner H.R."/>
        </authorList>
    </citation>
    <scope>NUCLEOTIDE SEQUENCE [LARGE SCALE GENOMIC DNA]</scope>
    <source>
        <strain>1330</strain>
    </source>
</reference>
<feature type="chain" id="PRO_0000192724" description="Bifunctional uridylyltransferase/uridylyl-removing enzyme">
    <location>
        <begin position="1"/>
        <end position="934"/>
    </location>
</feature>
<feature type="domain" description="HD" evidence="2">
    <location>
        <begin position="496"/>
        <end position="613"/>
    </location>
</feature>
<feature type="domain" description="ACT 1" evidence="1">
    <location>
        <begin position="737"/>
        <end position="818"/>
    </location>
</feature>
<feature type="domain" description="ACT 2" evidence="1">
    <location>
        <begin position="848"/>
        <end position="931"/>
    </location>
</feature>
<feature type="region of interest" description="Uridylyltransferase">
    <location>
        <begin position="1"/>
        <end position="379"/>
    </location>
</feature>
<feature type="region of interest" description="Uridylyl-removing">
    <location>
        <begin position="380"/>
        <end position="736"/>
    </location>
</feature>
<name>GLND_BRUSU</name>
<protein>
    <recommendedName>
        <fullName evidence="1">Bifunctional uridylyltransferase/uridylyl-removing enzyme</fullName>
        <shortName evidence="1">UTase/UR</shortName>
    </recommendedName>
    <alternativeName>
        <fullName evidence="1">Bifunctional [protein-PII] modification enzyme</fullName>
    </alternativeName>
    <alternativeName>
        <fullName evidence="1">Bifunctional nitrogen sensor protein</fullName>
    </alternativeName>
    <domain>
        <recommendedName>
            <fullName evidence="1">[Protein-PII] uridylyltransferase</fullName>
            <shortName evidence="1">PII uridylyltransferase</shortName>
            <shortName evidence="1">UTase</shortName>
            <ecNumber evidence="1">2.7.7.59</ecNumber>
        </recommendedName>
    </domain>
    <domain>
        <recommendedName>
            <fullName evidence="1">[Protein-PII]-UMP uridylyl-removing enzyme</fullName>
            <shortName evidence="1">UR</shortName>
            <ecNumber evidence="1">3.1.4.-</ecNumber>
        </recommendedName>
    </domain>
</protein>
<organism>
    <name type="scientific">Brucella suis biovar 1 (strain 1330)</name>
    <dbReference type="NCBI Taxonomy" id="204722"/>
    <lineage>
        <taxon>Bacteria</taxon>
        <taxon>Pseudomonadati</taxon>
        <taxon>Pseudomonadota</taxon>
        <taxon>Alphaproteobacteria</taxon>
        <taxon>Hyphomicrobiales</taxon>
        <taxon>Brucellaceae</taxon>
        <taxon>Brucella/Ochrobactrum group</taxon>
        <taxon>Brucella</taxon>
    </lineage>
</organism>
<dbReference type="EC" id="2.7.7.59" evidence="1"/>
<dbReference type="EC" id="3.1.4.-" evidence="1"/>
<dbReference type="EMBL" id="AE014291">
    <property type="protein sequence ID" value="AAN29098.1"/>
    <property type="molecule type" value="Genomic_DNA"/>
</dbReference>
<dbReference type="EMBL" id="CP002997">
    <property type="protein sequence ID" value="AEM17510.1"/>
    <property type="molecule type" value="Genomic_DNA"/>
</dbReference>
<dbReference type="RefSeq" id="WP_006191194.1">
    <property type="nucleotide sequence ID" value="NZ_KN046804.1"/>
</dbReference>
<dbReference type="SMR" id="Q8G312"/>
<dbReference type="GeneID" id="45051289"/>
<dbReference type="KEGG" id="bms:BR0144"/>
<dbReference type="KEGG" id="bsi:BS1330_I0144"/>
<dbReference type="PATRIC" id="fig|204722.21.peg.3314"/>
<dbReference type="HOGENOM" id="CLU_012833_1_0_5"/>
<dbReference type="PhylomeDB" id="Q8G312"/>
<dbReference type="PRO" id="PR:Q8G312"/>
<dbReference type="Proteomes" id="UP000007104">
    <property type="component" value="Chromosome I"/>
</dbReference>
<dbReference type="GO" id="GO:0008773">
    <property type="term" value="F:[protein-PII] uridylyltransferase activity"/>
    <property type="evidence" value="ECO:0007669"/>
    <property type="project" value="UniProtKB-UniRule"/>
</dbReference>
<dbReference type="GO" id="GO:0008081">
    <property type="term" value="F:phosphoric diester hydrolase activity"/>
    <property type="evidence" value="ECO:0007669"/>
    <property type="project" value="UniProtKB-UniRule"/>
</dbReference>
<dbReference type="GO" id="GO:0006808">
    <property type="term" value="P:regulation of nitrogen utilization"/>
    <property type="evidence" value="ECO:0007669"/>
    <property type="project" value="UniProtKB-UniRule"/>
</dbReference>
<dbReference type="CDD" id="cd04899">
    <property type="entry name" value="ACT_ACR-UUR-like_2"/>
    <property type="match status" value="1"/>
</dbReference>
<dbReference type="CDD" id="cd04900">
    <property type="entry name" value="ACT_UUR-like_1"/>
    <property type="match status" value="1"/>
</dbReference>
<dbReference type="CDD" id="cd00077">
    <property type="entry name" value="HDc"/>
    <property type="match status" value="1"/>
</dbReference>
<dbReference type="CDD" id="cd05401">
    <property type="entry name" value="NT_GlnE_GlnD_like"/>
    <property type="match status" value="1"/>
</dbReference>
<dbReference type="Gene3D" id="3.30.70.260">
    <property type="match status" value="1"/>
</dbReference>
<dbReference type="Gene3D" id="3.30.460.10">
    <property type="entry name" value="Beta Polymerase, domain 2"/>
    <property type="match status" value="1"/>
</dbReference>
<dbReference type="Gene3D" id="1.10.3090.10">
    <property type="entry name" value="cca-adding enzyme, domain 2"/>
    <property type="match status" value="1"/>
</dbReference>
<dbReference type="HAMAP" id="MF_00277">
    <property type="entry name" value="PII_uridylyl_transf"/>
    <property type="match status" value="1"/>
</dbReference>
<dbReference type="InterPro" id="IPR045865">
    <property type="entry name" value="ACT-like_dom_sf"/>
</dbReference>
<dbReference type="InterPro" id="IPR002912">
    <property type="entry name" value="ACT_dom"/>
</dbReference>
<dbReference type="InterPro" id="IPR003607">
    <property type="entry name" value="HD/PDEase_dom"/>
</dbReference>
<dbReference type="InterPro" id="IPR006674">
    <property type="entry name" value="HD_domain"/>
</dbReference>
<dbReference type="InterPro" id="IPR043519">
    <property type="entry name" value="NT_sf"/>
</dbReference>
<dbReference type="InterPro" id="IPR013546">
    <property type="entry name" value="PII_UdlTrfase/GS_AdlTrfase"/>
</dbReference>
<dbReference type="InterPro" id="IPR010043">
    <property type="entry name" value="UTase/UR"/>
</dbReference>
<dbReference type="NCBIfam" id="NF003467">
    <property type="entry name" value="PRK05092.1"/>
    <property type="match status" value="1"/>
</dbReference>
<dbReference type="NCBIfam" id="TIGR01693">
    <property type="entry name" value="UTase_glnD"/>
    <property type="match status" value="1"/>
</dbReference>
<dbReference type="PANTHER" id="PTHR47320">
    <property type="entry name" value="BIFUNCTIONAL URIDYLYLTRANSFERASE/URIDYLYL-REMOVING ENZYME"/>
    <property type="match status" value="1"/>
</dbReference>
<dbReference type="PANTHER" id="PTHR47320:SF1">
    <property type="entry name" value="BIFUNCTIONAL URIDYLYLTRANSFERASE_URIDYLYL-REMOVING ENZYME"/>
    <property type="match status" value="1"/>
</dbReference>
<dbReference type="Pfam" id="PF01842">
    <property type="entry name" value="ACT"/>
    <property type="match status" value="2"/>
</dbReference>
<dbReference type="Pfam" id="PF08335">
    <property type="entry name" value="GlnD_UR_UTase"/>
    <property type="match status" value="1"/>
</dbReference>
<dbReference type="Pfam" id="PF01966">
    <property type="entry name" value="HD"/>
    <property type="match status" value="1"/>
</dbReference>
<dbReference type="PIRSF" id="PIRSF006288">
    <property type="entry name" value="PII_uridyltransf"/>
    <property type="match status" value="1"/>
</dbReference>
<dbReference type="SMART" id="SM00471">
    <property type="entry name" value="HDc"/>
    <property type="match status" value="1"/>
</dbReference>
<dbReference type="SUPFAM" id="SSF55021">
    <property type="entry name" value="ACT-like"/>
    <property type="match status" value="2"/>
</dbReference>
<dbReference type="SUPFAM" id="SSF81301">
    <property type="entry name" value="Nucleotidyltransferase"/>
    <property type="match status" value="1"/>
</dbReference>
<dbReference type="SUPFAM" id="SSF81593">
    <property type="entry name" value="Nucleotidyltransferase substrate binding subunit/domain"/>
    <property type="match status" value="1"/>
</dbReference>
<dbReference type="SUPFAM" id="SSF81891">
    <property type="entry name" value="Poly A polymerase C-terminal region-like"/>
    <property type="match status" value="1"/>
</dbReference>
<dbReference type="PROSITE" id="PS51671">
    <property type="entry name" value="ACT"/>
    <property type="match status" value="2"/>
</dbReference>
<dbReference type="PROSITE" id="PS51831">
    <property type="entry name" value="HD"/>
    <property type="match status" value="1"/>
</dbReference>
<comment type="function">
    <text evidence="1">Modifies, by uridylylation and deuridylylation, the PII regulatory proteins (GlnB and homologs), in response to the nitrogen status of the cell that GlnD senses through the glutamine level. Under low glutamine levels, catalyzes the conversion of the PII proteins and UTP to PII-UMP and PPi, while under higher glutamine levels, GlnD hydrolyzes PII-UMP to PII and UMP (deuridylylation). Thus, controls uridylylation state and activity of the PII proteins, and plays an important role in the regulation of nitrogen assimilation and metabolism.</text>
</comment>
<comment type="catalytic activity">
    <reaction evidence="1">
        <text>[protein-PII]-L-tyrosine + UTP = [protein-PII]-uridylyl-L-tyrosine + diphosphate</text>
        <dbReference type="Rhea" id="RHEA:13673"/>
        <dbReference type="Rhea" id="RHEA-COMP:12147"/>
        <dbReference type="Rhea" id="RHEA-COMP:12148"/>
        <dbReference type="ChEBI" id="CHEBI:33019"/>
        <dbReference type="ChEBI" id="CHEBI:46398"/>
        <dbReference type="ChEBI" id="CHEBI:46858"/>
        <dbReference type="ChEBI" id="CHEBI:90602"/>
        <dbReference type="EC" id="2.7.7.59"/>
    </reaction>
</comment>
<comment type="catalytic activity">
    <reaction evidence="1">
        <text>[protein-PII]-uridylyl-L-tyrosine + H2O = [protein-PII]-L-tyrosine + UMP + H(+)</text>
        <dbReference type="Rhea" id="RHEA:48600"/>
        <dbReference type="Rhea" id="RHEA-COMP:12147"/>
        <dbReference type="Rhea" id="RHEA-COMP:12148"/>
        <dbReference type="ChEBI" id="CHEBI:15377"/>
        <dbReference type="ChEBI" id="CHEBI:15378"/>
        <dbReference type="ChEBI" id="CHEBI:46858"/>
        <dbReference type="ChEBI" id="CHEBI:57865"/>
        <dbReference type="ChEBI" id="CHEBI:90602"/>
    </reaction>
</comment>
<comment type="cofactor">
    <cofactor evidence="1">
        <name>Mg(2+)</name>
        <dbReference type="ChEBI" id="CHEBI:18420"/>
    </cofactor>
</comment>
<comment type="activity regulation">
    <text evidence="1">Uridylyltransferase (UTase) activity is inhibited by glutamine, while glutamine activates uridylyl-removing (UR) activity.</text>
</comment>
<comment type="domain">
    <text evidence="1">Has four distinct domains: an N-terminal nucleotidyltransferase (NT) domain responsible for UTase activity, a central HD domain that encodes UR activity, and two C-terminal ACT domains that seem to have a role in glutamine sensing.</text>
</comment>
<comment type="similarity">
    <text evidence="1">Belongs to the GlnD family.</text>
</comment>
<accession>Q8G312</accession>
<accession>G0KBB8</accession>
<gene>
    <name evidence="1" type="primary">glnD</name>
    <name type="ordered locus">BR0144</name>
    <name type="ordered locus">BS1330_I0144</name>
</gene>
<proteinExistence type="inferred from homology"/>
<keyword id="KW-0378">Hydrolase</keyword>
<keyword id="KW-0460">Magnesium</keyword>
<keyword id="KW-0511">Multifunctional enzyme</keyword>
<keyword id="KW-0548">Nucleotidyltransferase</keyword>
<keyword id="KW-0677">Repeat</keyword>
<keyword id="KW-0808">Transferase</keyword>
<evidence type="ECO:0000255" key="1">
    <source>
        <dbReference type="HAMAP-Rule" id="MF_00277"/>
    </source>
</evidence>
<evidence type="ECO:0000255" key="2">
    <source>
        <dbReference type="PROSITE-ProRule" id="PRU01175"/>
    </source>
</evidence>